<accession>Q8BDE5</accession>
<reference key="1">
    <citation type="journal article" date="2002" name="Virology">
        <title>High genetic divergence and recombination in Arenaviruses from the Americas.</title>
        <authorList>
            <person name="Archer A.M."/>
            <person name="Rico-Hesse R."/>
        </authorList>
    </citation>
    <scope>NUCLEOTIDE SEQUENCE [GENOMIC RNA]</scope>
</reference>
<evidence type="ECO:0000255" key="1">
    <source>
        <dbReference type="HAMAP-Rule" id="MF_04085"/>
    </source>
</evidence>
<dbReference type="EC" id="3.1.13.-" evidence="1"/>
<dbReference type="EMBL" id="AF485261">
    <property type="protein sequence ID" value="AAN09945.1"/>
    <property type="molecule type" value="Genomic_RNA"/>
</dbReference>
<dbReference type="SMR" id="Q8BDE5"/>
<dbReference type="Proteomes" id="UP000009265">
    <property type="component" value="Genome"/>
</dbReference>
<dbReference type="GO" id="GO:0019029">
    <property type="term" value="C:helical viral capsid"/>
    <property type="evidence" value="ECO:0007669"/>
    <property type="project" value="UniProtKB-UniRule"/>
</dbReference>
<dbReference type="GO" id="GO:0030430">
    <property type="term" value="C:host cell cytoplasm"/>
    <property type="evidence" value="ECO:0007669"/>
    <property type="project" value="UniProtKB-SubCell"/>
</dbReference>
<dbReference type="GO" id="GO:1990904">
    <property type="term" value="C:ribonucleoprotein complex"/>
    <property type="evidence" value="ECO:0007669"/>
    <property type="project" value="UniProtKB-KW"/>
</dbReference>
<dbReference type="GO" id="GO:0019013">
    <property type="term" value="C:viral nucleocapsid"/>
    <property type="evidence" value="ECO:0007669"/>
    <property type="project" value="UniProtKB-UniRule"/>
</dbReference>
<dbReference type="GO" id="GO:0016787">
    <property type="term" value="F:hydrolase activity"/>
    <property type="evidence" value="ECO:0007669"/>
    <property type="project" value="UniProtKB-KW"/>
</dbReference>
<dbReference type="GO" id="GO:0046872">
    <property type="term" value="F:metal ion binding"/>
    <property type="evidence" value="ECO:0007669"/>
    <property type="project" value="UniProtKB-UniRule"/>
</dbReference>
<dbReference type="GO" id="GO:0003723">
    <property type="term" value="F:RNA binding"/>
    <property type="evidence" value="ECO:0007669"/>
    <property type="project" value="UniProtKB-UniRule"/>
</dbReference>
<dbReference type="GO" id="GO:0039689">
    <property type="term" value="P:negative stranded viral RNA replication"/>
    <property type="evidence" value="ECO:0000250"/>
    <property type="project" value="UniProtKB"/>
</dbReference>
<dbReference type="GO" id="GO:0039696">
    <property type="term" value="P:RNA-templated viral transcription"/>
    <property type="evidence" value="ECO:0000250"/>
    <property type="project" value="UniProtKB"/>
</dbReference>
<dbReference type="GO" id="GO:0039724">
    <property type="term" value="P:symbiont-mediated suppression of host cytoplasmic pattern recognition receptor signaling pathway via inhibition of IKBKE activity"/>
    <property type="evidence" value="ECO:0007669"/>
    <property type="project" value="UniProtKB-UniRule"/>
</dbReference>
<dbReference type="FunFam" id="1.10.150.550:FF:000001">
    <property type="entry name" value="Nucleoprotein"/>
    <property type="match status" value="1"/>
</dbReference>
<dbReference type="FunFam" id="1.10.150.550:FF:000002">
    <property type="entry name" value="Nucleoprotein"/>
    <property type="match status" value="1"/>
</dbReference>
<dbReference type="FunFam" id="3.30.420.410:FF:000001">
    <property type="entry name" value="Nucleoprotein"/>
    <property type="match status" value="1"/>
</dbReference>
<dbReference type="Gene3D" id="3.30.420.410">
    <property type="entry name" value="Arenaviral nucleoprotein, C-terminal domain"/>
    <property type="match status" value="1"/>
</dbReference>
<dbReference type="Gene3D" id="1.10.150.550">
    <property type="entry name" value="Arenavirus nucleocapsid protein, head domain"/>
    <property type="match status" value="3"/>
</dbReference>
<dbReference type="HAMAP" id="MF_04085">
    <property type="entry name" value="ARENA_NCAP"/>
    <property type="match status" value="1"/>
</dbReference>
<dbReference type="InterPro" id="IPR000229">
    <property type="entry name" value="Nucleocapsid_arenaviridae"/>
</dbReference>
<dbReference type="InterPro" id="IPR035084">
    <property type="entry name" value="Nucleocapsid_C_arenaviridae"/>
</dbReference>
<dbReference type="InterPro" id="IPR038115">
    <property type="entry name" value="Nucleocapsid_C_sf"/>
</dbReference>
<dbReference type="InterPro" id="IPR035083">
    <property type="entry name" value="Nucleocapsid_N_arenaviridae"/>
</dbReference>
<dbReference type="Pfam" id="PF17290">
    <property type="entry name" value="Arena_ncap_C"/>
    <property type="match status" value="1"/>
</dbReference>
<dbReference type="Pfam" id="PF00843">
    <property type="entry name" value="Arena_nucleocap"/>
    <property type="match status" value="1"/>
</dbReference>
<dbReference type="PIRSF" id="PIRSF004029">
    <property type="entry name" value="N_ArenaV"/>
    <property type="match status" value="1"/>
</dbReference>
<keyword id="KW-0167">Capsid protein</keyword>
<keyword id="KW-1139">Helical capsid protein</keyword>
<keyword id="KW-1035">Host cytoplasm</keyword>
<keyword id="KW-0945">Host-virus interaction</keyword>
<keyword id="KW-0378">Hydrolase</keyword>
<keyword id="KW-1224">Inhibition of host IKBKE by virus</keyword>
<keyword id="KW-1090">Inhibition of host innate immune response by virus</keyword>
<keyword id="KW-1113">Inhibition of host RLR pathway by virus</keyword>
<keyword id="KW-0922">Interferon antiviral system evasion</keyword>
<keyword id="KW-0464">Manganese</keyword>
<keyword id="KW-0479">Metal-binding</keyword>
<keyword id="KW-1185">Reference proteome</keyword>
<keyword id="KW-0687">Ribonucleoprotein</keyword>
<keyword id="KW-0694">RNA-binding</keyword>
<keyword id="KW-0899">Viral immunoevasion</keyword>
<keyword id="KW-0543">Viral nucleoprotein</keyword>
<keyword id="KW-0946">Virion</keyword>
<keyword id="KW-0862">Zinc</keyword>
<comment type="function">
    <text evidence="1">Encapsidates the genome, protecting it from nucleases. The encapsidated genomic RNA is termed the nucleocapsid (NC). Serves as template for viral transcription and replication. The increased presence of protein N in host cell does not seem to trigger the switch from transcription to replication as observed in other negative strain RNA viruses. Through the interaction with host IKBKE, strongly inhibits the phosphorylation and nuclear translocation of host IRF3, a protein involved in interferon activation pathway, leading to the inhibition of interferon-beta and IRF3-dependent promoters activation. Also encodes a functional 3'-5' exoribonuclease that degrades preferentially dsRNA substrates and thereby participates in the suppression of interferon induction.</text>
</comment>
<comment type="subunit">
    <text evidence="1">Homomultimerizes to form the nucleocapsid. Binds to viral genomic RNA. Interacts with glycoprotein G2. Interacts with protein Z; this interaction probably directs the encapsidated genome to budding sites. Interacts with protein L; this interaction does not interfere with Z-L interaction. Interacts with host IKBKE (via Protein kinase domain); the interaction inhibits IKBKE kinase activity.</text>
</comment>
<comment type="subcellular location">
    <subcellularLocation>
        <location evidence="1">Virion</location>
    </subcellularLocation>
    <subcellularLocation>
        <location evidence="1">Host cytoplasm</location>
    </subcellularLocation>
</comment>
<comment type="domain">
    <text evidence="1">The N-terminal region is important for the cap-binding activity while the C-terminal region contains the 3'-5' exoribonuclease activity. A CCHE zinc binding site is present in the C-terminal region and may thus contribute to the substrate binding and/or the specificity of the exonuclease activity.</text>
</comment>
<comment type="similarity">
    <text evidence="1">Belongs to the arenaviridae nucleocapsid protein family.</text>
</comment>
<gene>
    <name evidence="1" type="primary">N</name>
</gene>
<name>NCAP_PARVP</name>
<feature type="chain" id="PRO_0000361012" description="Nucleoprotein">
    <location>
        <begin position="1"/>
        <end position="559"/>
    </location>
</feature>
<feature type="region of interest" description="Binding site for the cap structure m7GTP" evidence="1">
    <location>
        <begin position="53"/>
        <end position="235"/>
    </location>
</feature>
<feature type="binding site" evidence="1">
    <location>
        <position position="378"/>
    </location>
    <ligand>
        <name>Mn(2+)</name>
        <dbReference type="ChEBI" id="CHEBI:29035"/>
    </ligand>
</feature>
<feature type="binding site" evidence="1">
    <location>
        <position position="380"/>
    </location>
    <ligand>
        <name>Mn(2+)</name>
        <dbReference type="ChEBI" id="CHEBI:29035"/>
    </ligand>
</feature>
<feature type="binding site" evidence="1">
    <location>
        <position position="388"/>
    </location>
    <ligand>
        <name>Zn(2+)</name>
        <dbReference type="ChEBI" id="CHEBI:29105"/>
    </ligand>
</feature>
<feature type="binding site" evidence="1">
    <location>
        <position position="495"/>
    </location>
    <ligand>
        <name>Zn(2+)</name>
        <dbReference type="ChEBI" id="CHEBI:29105"/>
    </ligand>
</feature>
<feature type="binding site" evidence="1">
    <location>
        <position position="498"/>
    </location>
    <ligand>
        <name>Zn(2+)</name>
        <dbReference type="ChEBI" id="CHEBI:29105"/>
    </ligand>
</feature>
<feature type="binding site" evidence="1">
    <location>
        <position position="519"/>
    </location>
    <ligand>
        <name>Zn(2+)</name>
        <dbReference type="ChEBI" id="CHEBI:29105"/>
    </ligand>
</feature>
<feature type="binding site" evidence="1">
    <location>
        <position position="523"/>
    </location>
    <ligand>
        <name>Mn(2+)</name>
        <dbReference type="ChEBI" id="CHEBI:29035"/>
    </ligand>
</feature>
<feature type="site" description="Important for exonuclease activity" evidence="1">
    <location>
        <position position="455"/>
    </location>
</feature>
<proteinExistence type="inferred from homology"/>
<organismHost>
    <name type="scientific">Sooretamys angouya</name>
    <name type="common">Paraguayan rice rat</name>
    <name type="synonym">Oryzomys angouya</name>
    <dbReference type="NCBI Taxonomy" id="530180"/>
</organismHost>
<organism>
    <name type="scientific">Parana mammarenavirus (isolate Rat/Paraguay/12056/1965)</name>
    <name type="common">PARV</name>
    <name type="synonym">Paran mammarenavirus</name>
    <dbReference type="NCBI Taxonomy" id="3052323"/>
    <lineage>
        <taxon>Viruses</taxon>
        <taxon>Riboviria</taxon>
        <taxon>Orthornavirae</taxon>
        <taxon>Negarnaviricota</taxon>
        <taxon>Polyploviricotina</taxon>
        <taxon>Ellioviricetes</taxon>
        <taxon>Bunyavirales</taxon>
        <taxon>Arenaviridae</taxon>
        <taxon>Mammarenavirus</taxon>
    </lineage>
</organism>
<protein>
    <recommendedName>
        <fullName evidence="1">Nucleoprotein</fullName>
        <ecNumber evidence="1">3.1.13.-</ecNumber>
    </recommendedName>
    <alternativeName>
        <fullName evidence="1">Nucleocapsid protein</fullName>
    </alternativeName>
    <alternativeName>
        <fullName evidence="1">Protein N</fullName>
    </alternativeName>
</protein>
<sequence length="559" mass="61831">MSEKQVPSFRWTQALRRGLSNWTEPVKVDVIKDARAIISALDFNQVAQVQRIMRKEKRTDSDLTRLRDMNKEVDALMSMRSTQHNVVLRAGGLSKDELLELSADLEKLRKKVIRAEGGNPGVYQGNLTATQLNQRAELMKLVGMGPGLRSGNGVVRVWDVKDSSLMINQFGSMPALTIACMTEQGGETMNDVVQGLSALGLVYTVKFPNLDDLEKLSEQHPCLKSITQEQSQINISGYNLSLSAAVKAGACMIDGGNMLETIKMSPPMFSSIIKAVLQVKNREQMFVGSVGVQRNPYENLLYKLCLSGEGWPYIGSRSQIVGRAWDNTLIDLEGKPAVSPPPVKNGGPINLSPLSKGQEDLINQAVQKLSPKETTWIDIEGPAGDPVELAIYQPESGNYLHCYRAPHNESAFKDQSRYSHGLLLKDLKAARPGLISAIIKALPKGMVLTAQGSDDIEQLILMHGRRDIKVVDVKLTSEHARVFEDPVWDRFNPLCEKHTGLVIKKKKKGAPPSSTNPHCALMDCIMFDATVTGYIRDVKPRQLIPIDLLFKDDLNLINL</sequence>